<comment type="function">
    <text evidence="1">Protein S19 forms a complex with S13 that binds strongly to the 16S ribosomal RNA.</text>
</comment>
<comment type="similarity">
    <text evidence="2">Belongs to the universal ribosomal protein uS19 family.</text>
</comment>
<organism>
    <name type="scientific">Mycobacterium leprae (strain TN)</name>
    <dbReference type="NCBI Taxonomy" id="272631"/>
    <lineage>
        <taxon>Bacteria</taxon>
        <taxon>Bacillati</taxon>
        <taxon>Actinomycetota</taxon>
        <taxon>Actinomycetes</taxon>
        <taxon>Mycobacteriales</taxon>
        <taxon>Mycobacteriaceae</taxon>
        <taxon>Mycobacterium</taxon>
    </lineage>
</organism>
<keyword id="KW-1185">Reference proteome</keyword>
<keyword id="KW-0687">Ribonucleoprotein</keyword>
<keyword id="KW-0689">Ribosomal protein</keyword>
<keyword id="KW-0694">RNA-binding</keyword>
<keyword id="KW-0699">rRNA-binding</keyword>
<evidence type="ECO:0000250" key="1"/>
<evidence type="ECO:0000305" key="2"/>
<name>RS19_MYCLE</name>
<sequence>MPRSLKKGPFVDDHLLKKVDVQNEKNTKQVIKTWSRRSTIIPDFIGHTFAVHDGRKHVPVFVTEAMVGHKLGEFAPTRTFKGHIKDDRKAKRR</sequence>
<protein>
    <recommendedName>
        <fullName evidence="2">Small ribosomal subunit protein uS19</fullName>
    </recommendedName>
    <alternativeName>
        <fullName>30S ribosomal protein S19</fullName>
    </alternativeName>
</protein>
<accession>O32985</accession>
<reference key="1">
    <citation type="journal article" date="2001" name="Nature">
        <title>Massive gene decay in the leprosy bacillus.</title>
        <authorList>
            <person name="Cole S.T."/>
            <person name="Eiglmeier K."/>
            <person name="Parkhill J."/>
            <person name="James K.D."/>
            <person name="Thomson N.R."/>
            <person name="Wheeler P.R."/>
            <person name="Honore N."/>
            <person name="Garnier T."/>
            <person name="Churcher C.M."/>
            <person name="Harris D.E."/>
            <person name="Mungall K.L."/>
            <person name="Basham D."/>
            <person name="Brown D."/>
            <person name="Chillingworth T."/>
            <person name="Connor R."/>
            <person name="Davies R.M."/>
            <person name="Devlin K."/>
            <person name="Duthoy S."/>
            <person name="Feltwell T."/>
            <person name="Fraser A."/>
            <person name="Hamlin N."/>
            <person name="Holroyd S."/>
            <person name="Hornsby T."/>
            <person name="Jagels K."/>
            <person name="Lacroix C."/>
            <person name="Maclean J."/>
            <person name="Moule S."/>
            <person name="Murphy L.D."/>
            <person name="Oliver K."/>
            <person name="Quail M.A."/>
            <person name="Rajandream M.A."/>
            <person name="Rutherford K.M."/>
            <person name="Rutter S."/>
            <person name="Seeger K."/>
            <person name="Simon S."/>
            <person name="Simmonds M."/>
            <person name="Skelton J."/>
            <person name="Squares R."/>
            <person name="Squares S."/>
            <person name="Stevens K."/>
            <person name="Taylor K."/>
            <person name="Whitehead S."/>
            <person name="Woodward J.R."/>
            <person name="Barrell B.G."/>
        </authorList>
    </citation>
    <scope>NUCLEOTIDE SEQUENCE [LARGE SCALE GENOMIC DNA]</scope>
    <source>
        <strain>TN</strain>
    </source>
</reference>
<gene>
    <name type="primary">rpsS</name>
    <name type="ordered locus">ML1859</name>
    <name type="ORF">MLCB2492.06</name>
</gene>
<feature type="chain" id="PRO_0000129861" description="Small ribosomal subunit protein uS19">
    <location>
        <begin position="1"/>
        <end position="93"/>
    </location>
</feature>
<proteinExistence type="inferred from homology"/>
<dbReference type="EMBL" id="Z98756">
    <property type="protein sequence ID" value="CAB11438.1"/>
    <property type="molecule type" value="Genomic_DNA"/>
</dbReference>
<dbReference type="EMBL" id="AL583923">
    <property type="protein sequence ID" value="CAC30813.1"/>
    <property type="molecule type" value="Genomic_DNA"/>
</dbReference>
<dbReference type="PIR" id="T45368">
    <property type="entry name" value="T45368"/>
</dbReference>
<dbReference type="RefSeq" id="NP_302261.1">
    <property type="nucleotide sequence ID" value="NC_002677.1"/>
</dbReference>
<dbReference type="RefSeq" id="WP_010908582.1">
    <property type="nucleotide sequence ID" value="NC_002677.1"/>
</dbReference>
<dbReference type="SMR" id="O32985"/>
<dbReference type="STRING" id="272631.gene:17575707"/>
<dbReference type="KEGG" id="mle:ML1859"/>
<dbReference type="PATRIC" id="fig|272631.5.peg.3520"/>
<dbReference type="Leproma" id="ML1859"/>
<dbReference type="eggNOG" id="COG0185">
    <property type="taxonomic scope" value="Bacteria"/>
</dbReference>
<dbReference type="HOGENOM" id="CLU_144911_0_1_11"/>
<dbReference type="OrthoDB" id="9797833at2"/>
<dbReference type="Proteomes" id="UP000000806">
    <property type="component" value="Chromosome"/>
</dbReference>
<dbReference type="GO" id="GO:0005737">
    <property type="term" value="C:cytoplasm"/>
    <property type="evidence" value="ECO:0007669"/>
    <property type="project" value="UniProtKB-ARBA"/>
</dbReference>
<dbReference type="GO" id="GO:0015935">
    <property type="term" value="C:small ribosomal subunit"/>
    <property type="evidence" value="ECO:0007669"/>
    <property type="project" value="InterPro"/>
</dbReference>
<dbReference type="GO" id="GO:0019843">
    <property type="term" value="F:rRNA binding"/>
    <property type="evidence" value="ECO:0007669"/>
    <property type="project" value="UniProtKB-UniRule"/>
</dbReference>
<dbReference type="GO" id="GO:0003735">
    <property type="term" value="F:structural constituent of ribosome"/>
    <property type="evidence" value="ECO:0007669"/>
    <property type="project" value="InterPro"/>
</dbReference>
<dbReference type="GO" id="GO:0000028">
    <property type="term" value="P:ribosomal small subunit assembly"/>
    <property type="evidence" value="ECO:0007669"/>
    <property type="project" value="TreeGrafter"/>
</dbReference>
<dbReference type="GO" id="GO:0006412">
    <property type="term" value="P:translation"/>
    <property type="evidence" value="ECO:0007669"/>
    <property type="project" value="UniProtKB-UniRule"/>
</dbReference>
<dbReference type="FunFam" id="3.30.860.10:FF:000001">
    <property type="entry name" value="30S ribosomal protein S19"/>
    <property type="match status" value="1"/>
</dbReference>
<dbReference type="Gene3D" id="3.30.860.10">
    <property type="entry name" value="30s Ribosomal Protein S19, Chain A"/>
    <property type="match status" value="1"/>
</dbReference>
<dbReference type="HAMAP" id="MF_00531">
    <property type="entry name" value="Ribosomal_uS19"/>
    <property type="match status" value="1"/>
</dbReference>
<dbReference type="InterPro" id="IPR002222">
    <property type="entry name" value="Ribosomal_uS19"/>
</dbReference>
<dbReference type="InterPro" id="IPR005732">
    <property type="entry name" value="Ribosomal_uS19_bac-type"/>
</dbReference>
<dbReference type="InterPro" id="IPR020934">
    <property type="entry name" value="Ribosomal_uS19_CS"/>
</dbReference>
<dbReference type="InterPro" id="IPR023575">
    <property type="entry name" value="Ribosomal_uS19_SF"/>
</dbReference>
<dbReference type="NCBIfam" id="TIGR01050">
    <property type="entry name" value="rpsS_bact"/>
    <property type="match status" value="1"/>
</dbReference>
<dbReference type="PANTHER" id="PTHR11880">
    <property type="entry name" value="RIBOSOMAL PROTEIN S19P FAMILY MEMBER"/>
    <property type="match status" value="1"/>
</dbReference>
<dbReference type="PANTHER" id="PTHR11880:SF8">
    <property type="entry name" value="SMALL RIBOSOMAL SUBUNIT PROTEIN US19M"/>
    <property type="match status" value="1"/>
</dbReference>
<dbReference type="Pfam" id="PF00203">
    <property type="entry name" value="Ribosomal_S19"/>
    <property type="match status" value="1"/>
</dbReference>
<dbReference type="PIRSF" id="PIRSF002144">
    <property type="entry name" value="Ribosomal_S19"/>
    <property type="match status" value="1"/>
</dbReference>
<dbReference type="PRINTS" id="PR00975">
    <property type="entry name" value="RIBOSOMALS19"/>
</dbReference>
<dbReference type="SUPFAM" id="SSF54570">
    <property type="entry name" value="Ribosomal protein S19"/>
    <property type="match status" value="1"/>
</dbReference>
<dbReference type="PROSITE" id="PS00323">
    <property type="entry name" value="RIBOSOMAL_S19"/>
    <property type="match status" value="1"/>
</dbReference>